<organism>
    <name type="scientific">Alcanivorax borkumensis (strain ATCC 700651 / DSM 11573 / NCIMB 13689 / SK2)</name>
    <dbReference type="NCBI Taxonomy" id="393595"/>
    <lineage>
        <taxon>Bacteria</taxon>
        <taxon>Pseudomonadati</taxon>
        <taxon>Pseudomonadota</taxon>
        <taxon>Gammaproteobacteria</taxon>
        <taxon>Oceanospirillales</taxon>
        <taxon>Alcanivoracaceae</taxon>
        <taxon>Alcanivorax</taxon>
    </lineage>
</organism>
<feature type="chain" id="PRO_0000357357" description="Enolase-phosphatase E1">
    <location>
        <begin position="1"/>
        <end position="226"/>
    </location>
</feature>
<sequence length="226" mass="24974">MINAIITDIEGTTSSIAFVKEVLFPYAAKRFPDFLADHWDHPCVQEQIKAAEKESGETLGSADKAAALFLRWIEEDRKATPLKTLQGMIWKAGYENGDYTAHMYPDTAPALKKWHQKGIALYVYSSGSITAQKLFFGYSDAGDLTGLLSGYFDTTTGPKQETDSYRKIQQAIDKPANTLLFLSDIEAELDAAAEAGFNTCLLDRQQAGLESRHPVASNFNHINLAD</sequence>
<protein>
    <recommendedName>
        <fullName evidence="1">Enolase-phosphatase E1</fullName>
        <ecNumber evidence="1">3.1.3.77</ecNumber>
    </recommendedName>
    <alternativeName>
        <fullName evidence="1">2,3-diketo-5-methylthio-1-phosphopentane phosphatase</fullName>
    </alternativeName>
</protein>
<evidence type="ECO:0000255" key="1">
    <source>
        <dbReference type="HAMAP-Rule" id="MF_01681"/>
    </source>
</evidence>
<evidence type="ECO:0000305" key="2"/>
<proteinExistence type="inferred from homology"/>
<comment type="function">
    <text evidence="1">Bifunctional enzyme that catalyzes the enolization of 2,3-diketo-5-methylthiopentyl-1-phosphate (DK-MTP-1-P) into the intermediate 2-hydroxy-3-keto-5-methylthiopentenyl-1-phosphate (HK-MTPenyl-1-P), which is then dephosphorylated to form the acireductone 1,2-dihydroxy-3-keto-5-methylthiopentene (DHK-MTPene).</text>
</comment>
<comment type="catalytic activity">
    <reaction evidence="1">
        <text>5-methylsulfanyl-2,3-dioxopentyl phosphate + H2O = 1,2-dihydroxy-5-(methylsulfanyl)pent-1-en-3-one + phosphate</text>
        <dbReference type="Rhea" id="RHEA:21700"/>
        <dbReference type="ChEBI" id="CHEBI:15377"/>
        <dbReference type="ChEBI" id="CHEBI:43474"/>
        <dbReference type="ChEBI" id="CHEBI:49252"/>
        <dbReference type="ChEBI" id="CHEBI:58828"/>
        <dbReference type="EC" id="3.1.3.77"/>
    </reaction>
</comment>
<comment type="cofactor">
    <cofactor evidence="1">
        <name>Mg(2+)</name>
        <dbReference type="ChEBI" id="CHEBI:18420"/>
    </cofactor>
    <text evidence="1">Binds 1 Mg(2+) ion per subunit.</text>
</comment>
<comment type="pathway">
    <text evidence="1">Amino-acid biosynthesis; L-methionine biosynthesis via salvage pathway; L-methionine from S-methyl-5-thio-alpha-D-ribose 1-phosphate: step 3/6.</text>
</comment>
<comment type="pathway">
    <text evidence="1">Amino-acid biosynthesis; L-methionine biosynthesis via salvage pathway; L-methionine from S-methyl-5-thio-alpha-D-ribose 1-phosphate: step 4/6.</text>
</comment>
<comment type="subunit">
    <text evidence="1">Monomer.</text>
</comment>
<comment type="similarity">
    <text evidence="1">Belongs to the HAD-like hydrolase superfamily. MasA/MtnC family.</text>
</comment>
<comment type="sequence caution" evidence="2">
    <conflict type="erroneous initiation">
        <sequence resource="EMBL-CDS" id="CAL16895"/>
    </conflict>
</comment>
<reference key="1">
    <citation type="journal article" date="2006" name="Nat. Biotechnol.">
        <title>Genome sequence of the ubiquitous hydrocarbon-degrading marine bacterium Alcanivorax borkumensis.</title>
        <authorList>
            <person name="Schneiker S."/>
            <person name="Martins dos Santos V.A.P."/>
            <person name="Bartels D."/>
            <person name="Bekel T."/>
            <person name="Brecht M."/>
            <person name="Buhrmester J."/>
            <person name="Chernikova T.N."/>
            <person name="Denaro R."/>
            <person name="Ferrer M."/>
            <person name="Gertler C."/>
            <person name="Goesmann A."/>
            <person name="Golyshina O.V."/>
            <person name="Kaminski F."/>
            <person name="Khachane A.N."/>
            <person name="Lang S."/>
            <person name="Linke B."/>
            <person name="McHardy A.C."/>
            <person name="Meyer F."/>
            <person name="Nechitaylo T."/>
            <person name="Puehler A."/>
            <person name="Regenhardt D."/>
            <person name="Rupp O."/>
            <person name="Sabirova J.S."/>
            <person name="Selbitschka W."/>
            <person name="Yakimov M.M."/>
            <person name="Timmis K.N."/>
            <person name="Vorhoelter F.-J."/>
            <person name="Weidner S."/>
            <person name="Kaiser O."/>
            <person name="Golyshin P.N."/>
        </authorList>
    </citation>
    <scope>NUCLEOTIDE SEQUENCE [LARGE SCALE GENOMIC DNA]</scope>
    <source>
        <strain>ATCC 700651 / DSM 11573 / NCIMB 13689 / SK2</strain>
    </source>
</reference>
<keyword id="KW-0028">Amino-acid biosynthesis</keyword>
<keyword id="KW-0378">Hydrolase</keyword>
<keyword id="KW-0460">Magnesium</keyword>
<keyword id="KW-0479">Metal-binding</keyword>
<keyword id="KW-0486">Methionine biosynthesis</keyword>
<keyword id="KW-1185">Reference proteome</keyword>
<dbReference type="EC" id="3.1.3.77" evidence="1"/>
<dbReference type="EMBL" id="AM286690">
    <property type="protein sequence ID" value="CAL16895.1"/>
    <property type="status" value="ALT_INIT"/>
    <property type="molecule type" value="Genomic_DNA"/>
</dbReference>
<dbReference type="RefSeq" id="WP_041704953.1">
    <property type="nucleotide sequence ID" value="NC_008260.1"/>
</dbReference>
<dbReference type="SMR" id="Q0VPK3"/>
<dbReference type="STRING" id="393595.ABO_1447"/>
<dbReference type="KEGG" id="abo:ABO_1447"/>
<dbReference type="eggNOG" id="COG4229">
    <property type="taxonomic scope" value="Bacteria"/>
</dbReference>
<dbReference type="HOGENOM" id="CLU_023273_0_0_6"/>
<dbReference type="OrthoDB" id="9797416at2"/>
<dbReference type="UniPathway" id="UPA00904">
    <property type="reaction ID" value="UER00876"/>
</dbReference>
<dbReference type="UniPathway" id="UPA00904">
    <property type="reaction ID" value="UER00877"/>
</dbReference>
<dbReference type="Proteomes" id="UP000008871">
    <property type="component" value="Chromosome"/>
</dbReference>
<dbReference type="GO" id="GO:0043715">
    <property type="term" value="F:2,3-diketo-5-methylthiopentyl-1-phosphate enolase activity"/>
    <property type="evidence" value="ECO:0007669"/>
    <property type="project" value="UniProtKB-UniRule"/>
</dbReference>
<dbReference type="GO" id="GO:0043716">
    <property type="term" value="F:2-hydroxy-3-keto-5-methylthiopentenyl-1-phosphate phosphatase activity"/>
    <property type="evidence" value="ECO:0007669"/>
    <property type="project" value="UniProtKB-UniRule"/>
</dbReference>
<dbReference type="GO" id="GO:0043874">
    <property type="term" value="F:acireductone synthase activity"/>
    <property type="evidence" value="ECO:0007669"/>
    <property type="project" value="UniProtKB-EC"/>
</dbReference>
<dbReference type="GO" id="GO:0000287">
    <property type="term" value="F:magnesium ion binding"/>
    <property type="evidence" value="ECO:0007669"/>
    <property type="project" value="UniProtKB-UniRule"/>
</dbReference>
<dbReference type="GO" id="GO:0019509">
    <property type="term" value="P:L-methionine salvage from methylthioadenosine"/>
    <property type="evidence" value="ECO:0007669"/>
    <property type="project" value="UniProtKB-UniRule"/>
</dbReference>
<dbReference type="CDD" id="cd01629">
    <property type="entry name" value="HAD_EP"/>
    <property type="match status" value="1"/>
</dbReference>
<dbReference type="Gene3D" id="1.10.720.60">
    <property type="match status" value="1"/>
</dbReference>
<dbReference type="Gene3D" id="3.40.50.1000">
    <property type="entry name" value="HAD superfamily/HAD-like"/>
    <property type="match status" value="1"/>
</dbReference>
<dbReference type="HAMAP" id="MF_01681">
    <property type="entry name" value="Salvage_MtnC"/>
    <property type="match status" value="1"/>
</dbReference>
<dbReference type="InterPro" id="IPR023943">
    <property type="entry name" value="Enolase-ppase_E1"/>
</dbReference>
<dbReference type="InterPro" id="IPR036412">
    <property type="entry name" value="HAD-like_sf"/>
</dbReference>
<dbReference type="InterPro" id="IPR006439">
    <property type="entry name" value="HAD-SF_hydro_IA"/>
</dbReference>
<dbReference type="InterPro" id="IPR023214">
    <property type="entry name" value="HAD_sf"/>
</dbReference>
<dbReference type="NCBIfam" id="TIGR01691">
    <property type="entry name" value="enolase-ppase"/>
    <property type="match status" value="1"/>
</dbReference>
<dbReference type="PANTHER" id="PTHR20371">
    <property type="entry name" value="ENOLASE-PHOSPHATASE E1"/>
    <property type="match status" value="1"/>
</dbReference>
<dbReference type="PANTHER" id="PTHR20371:SF1">
    <property type="entry name" value="ENOLASE-PHOSPHATASE E1"/>
    <property type="match status" value="1"/>
</dbReference>
<dbReference type="Pfam" id="PF00702">
    <property type="entry name" value="Hydrolase"/>
    <property type="match status" value="1"/>
</dbReference>
<dbReference type="PRINTS" id="PR00413">
    <property type="entry name" value="HADHALOGNASE"/>
</dbReference>
<dbReference type="SFLD" id="SFLDG01129">
    <property type="entry name" value="C1.5:_HAD__Beta-PGM__Phosphata"/>
    <property type="match status" value="1"/>
</dbReference>
<dbReference type="SFLD" id="SFLDF00044">
    <property type="entry name" value="enolase-phosphatase"/>
    <property type="match status" value="1"/>
</dbReference>
<dbReference type="SUPFAM" id="SSF56784">
    <property type="entry name" value="HAD-like"/>
    <property type="match status" value="1"/>
</dbReference>
<accession>Q0VPK3</accession>
<gene>
    <name evidence="1" type="primary">mtnC</name>
    <name type="ordered locus">ABO_1447</name>
</gene>
<name>MTNC_ALCBS</name>